<comment type="function">
    <text evidence="5 6 7 8">V region of the variable domain of immunoglobulin light chains that participates in the antigen recognition (PubMed:24600447). Immunoglobulins, also known as antibodies, are membrane-bound or secreted glycoproteins produced by B lymphocytes. In the recognition phase of humoral immunity, the membrane-bound immunoglobulins serve as receptors which, upon binding of a specific antigen, trigger the clonal expansion and differentiation of B lymphocytes into immunoglobulins-secreting plasma cells. Secreted immunoglobulins mediate the effector phase of humoral immunity, which results in the elimination of bound antigens (PubMed:20176268, PubMed:22158414). The antigen binding site is formed by the variable domain of one heavy chain, together with that of its associated light chain. Thus, each immunoglobulin has two antigen binding sites with remarkable affinity for a particular antigen. The variable domains are assembled by a process called V-(D)-J rearrangement and can then be subjected to somatic hypermutations which, after exposure to antigen and selection, allow affinity maturation for a particular antigen (PubMed:17576170, PubMed:20176268).</text>
</comment>
<comment type="subunit">
    <text evidence="6">Immunoglobulins are composed of two identical heavy chains and two identical light chains; disulfide-linked.</text>
</comment>
<comment type="subcellular location">
    <subcellularLocation>
        <location evidence="6 7">Secreted</location>
    </subcellularLocation>
    <subcellularLocation>
        <location evidence="6 7">Cell membrane</location>
    </subcellularLocation>
</comment>
<comment type="polymorphism">
    <text>There are several alleles. The sequence shown is that of IMGT allele IGLV3-10*01.</text>
</comment>
<comment type="caution">
    <text evidence="10">For an example of a full-length immunoglobulin lambda light chain see AC P0DOX8.</text>
</comment>
<comment type="sequence caution" evidence="10">
    <conflict type="erroneous gene model prediction">
        <sequence resource="EMBL-CDS" id="EAW59538"/>
    </conflict>
</comment>
<dbReference type="EMBL" id="AC245028">
    <property type="status" value="NOT_ANNOTATED_CDS"/>
    <property type="molecule type" value="Genomic_DNA"/>
</dbReference>
<dbReference type="EMBL" id="CH471095">
    <property type="protein sequence ID" value="EAW59538.1"/>
    <property type="status" value="ALT_SEQ"/>
    <property type="molecule type" value="Genomic_DNA"/>
</dbReference>
<dbReference type="EMDB" id="EMD-19818"/>
<dbReference type="EMDB" id="EMD-36576"/>
<dbReference type="SMR" id="A0A075B6K4"/>
<dbReference type="FunCoup" id="A0A075B6K4">
    <property type="interactions" value="425"/>
</dbReference>
<dbReference type="IMGT_GENE-DB" id="IGLV3-10"/>
<dbReference type="BioMuta" id="IGLV3-10"/>
<dbReference type="jPOST" id="A0A075B6K4"/>
<dbReference type="MassIVE" id="A0A075B6K4"/>
<dbReference type="Ensembl" id="ENST00000390315.3">
    <property type="protein sequence ID" value="ENSP00000374850.3"/>
    <property type="gene ID" value="ENSG00000211669.3"/>
</dbReference>
<dbReference type="UCSC" id="uc062cdh.1">
    <property type="organism name" value="human"/>
</dbReference>
<dbReference type="AGR" id="HGNC:5897"/>
<dbReference type="GeneCards" id="IGLV3-10"/>
<dbReference type="HGNC" id="HGNC:5897">
    <property type="gene designation" value="IGLV3-10"/>
</dbReference>
<dbReference type="HPA" id="ENSG00000211669">
    <property type="expression patterns" value="Tissue enhanced (intestine, lymphoid tissue, stomach)"/>
</dbReference>
<dbReference type="neXtProt" id="NX_A0A075B6K4"/>
<dbReference type="OpenTargets" id="ENSG00000211669"/>
<dbReference type="VEuPathDB" id="HostDB:ENSG00000211669"/>
<dbReference type="GeneTree" id="ENSGT00940000153120"/>
<dbReference type="HOGENOM" id="CLU_077975_4_0_1"/>
<dbReference type="InParanoid" id="A0A075B6K4"/>
<dbReference type="OMA" id="DNYAYWF"/>
<dbReference type="OrthoDB" id="9531984at2759"/>
<dbReference type="PAN-GO" id="A0A075B6K4">
    <property type="GO annotations" value="3 GO annotations based on evolutionary models"/>
</dbReference>
<dbReference type="PhylomeDB" id="A0A075B6K4"/>
<dbReference type="PathwayCommons" id="A0A075B6K4"/>
<dbReference type="SignaLink" id="A0A075B6K4"/>
<dbReference type="Pharos" id="A0A075B6K4">
    <property type="development level" value="Tdark"/>
</dbReference>
<dbReference type="PRO" id="PR:A0A075B6K4"/>
<dbReference type="Proteomes" id="UP000005640">
    <property type="component" value="Chromosome 22"/>
</dbReference>
<dbReference type="RNAct" id="A0A075B6K4">
    <property type="molecule type" value="protein"/>
</dbReference>
<dbReference type="Bgee" id="ENSG00000211669">
    <property type="expression patterns" value="Expressed in rectum and 123 other cell types or tissues"/>
</dbReference>
<dbReference type="GO" id="GO:0005576">
    <property type="term" value="C:extracellular region"/>
    <property type="evidence" value="ECO:0007669"/>
    <property type="project" value="UniProtKB-SubCell"/>
</dbReference>
<dbReference type="GO" id="GO:0019814">
    <property type="term" value="C:immunoglobulin complex"/>
    <property type="evidence" value="ECO:0000318"/>
    <property type="project" value="GO_Central"/>
</dbReference>
<dbReference type="GO" id="GO:0005886">
    <property type="term" value="C:plasma membrane"/>
    <property type="evidence" value="ECO:0007669"/>
    <property type="project" value="UniProtKB-SubCell"/>
</dbReference>
<dbReference type="GO" id="GO:0002250">
    <property type="term" value="P:adaptive immune response"/>
    <property type="evidence" value="ECO:0007669"/>
    <property type="project" value="UniProtKB-KW"/>
</dbReference>
<dbReference type="GO" id="GO:0006955">
    <property type="term" value="P:immune response"/>
    <property type="evidence" value="ECO:0000318"/>
    <property type="project" value="GO_Central"/>
</dbReference>
<dbReference type="FunFam" id="2.60.40.10:FF:000620">
    <property type="entry name" value="Immunoglobulin lambda locus"/>
    <property type="match status" value="1"/>
</dbReference>
<dbReference type="Gene3D" id="2.60.40.10">
    <property type="entry name" value="Immunoglobulins"/>
    <property type="match status" value="1"/>
</dbReference>
<dbReference type="InterPro" id="IPR007110">
    <property type="entry name" value="Ig-like_dom"/>
</dbReference>
<dbReference type="InterPro" id="IPR036179">
    <property type="entry name" value="Ig-like_dom_sf"/>
</dbReference>
<dbReference type="InterPro" id="IPR013783">
    <property type="entry name" value="Ig-like_fold"/>
</dbReference>
<dbReference type="InterPro" id="IPR003599">
    <property type="entry name" value="Ig_sub"/>
</dbReference>
<dbReference type="InterPro" id="IPR013106">
    <property type="entry name" value="Ig_V-set"/>
</dbReference>
<dbReference type="InterPro" id="IPR050150">
    <property type="entry name" value="IgV_Light_Chain"/>
</dbReference>
<dbReference type="PANTHER" id="PTHR23267">
    <property type="entry name" value="IMMUNOGLOBULIN LIGHT CHAIN"/>
    <property type="match status" value="1"/>
</dbReference>
<dbReference type="Pfam" id="PF07686">
    <property type="entry name" value="V-set"/>
    <property type="match status" value="1"/>
</dbReference>
<dbReference type="SMART" id="SM00409">
    <property type="entry name" value="IG"/>
    <property type="match status" value="1"/>
</dbReference>
<dbReference type="SMART" id="SM00406">
    <property type="entry name" value="IGv"/>
    <property type="match status" value="1"/>
</dbReference>
<dbReference type="SUPFAM" id="SSF48726">
    <property type="entry name" value="Immunoglobulin"/>
    <property type="match status" value="1"/>
</dbReference>
<dbReference type="PROSITE" id="PS50835">
    <property type="entry name" value="IG_LIKE"/>
    <property type="match status" value="1"/>
</dbReference>
<proteinExistence type="evidence at protein level"/>
<gene>
    <name evidence="4 9" type="primary">IGLV3-10</name>
</gene>
<keyword id="KW-1064">Adaptive immunity</keyword>
<keyword id="KW-1003">Cell membrane</keyword>
<keyword id="KW-1015">Disulfide bond</keyword>
<keyword id="KW-0391">Immunity</keyword>
<keyword id="KW-1280">Immunoglobulin</keyword>
<keyword id="KW-0393">Immunoglobulin domain</keyword>
<keyword id="KW-0472">Membrane</keyword>
<keyword id="KW-1267">Proteomics identification</keyword>
<keyword id="KW-1185">Reference proteome</keyword>
<keyword id="KW-0964">Secreted</keyword>
<keyword id="KW-0732">Signal</keyword>
<evidence type="ECO:0000250" key="1">
    <source>
        <dbReference type="UniProtKB" id="P01721"/>
    </source>
</evidence>
<evidence type="ECO:0000255" key="2"/>
<evidence type="ECO:0000255" key="3">
    <source>
        <dbReference type="PROSITE-ProRule" id="PRU00114"/>
    </source>
</evidence>
<evidence type="ECO:0000303" key="4">
    <source>
    </source>
</evidence>
<evidence type="ECO:0000303" key="5">
    <source>
    </source>
</evidence>
<evidence type="ECO:0000303" key="6">
    <source>
    </source>
</evidence>
<evidence type="ECO:0000303" key="7">
    <source>
    </source>
</evidence>
<evidence type="ECO:0000303" key="8">
    <source>
    </source>
</evidence>
<evidence type="ECO:0000303" key="9">
    <source ref="4"/>
</evidence>
<evidence type="ECO:0000305" key="10"/>
<name>LV310_HUMAN</name>
<protein>
    <recommendedName>
        <fullName evidence="4 9">Immunoglobulin lambda variable 3-10</fullName>
    </recommendedName>
</protein>
<accession>A0A075B6K4</accession>
<reference key="1">
    <citation type="journal article" date="1999" name="Nature">
        <title>The DNA sequence of human chromosome 22.</title>
        <authorList>
            <person name="Dunham I."/>
            <person name="Hunt A.R."/>
            <person name="Collins J.E."/>
            <person name="Bruskiewich R."/>
            <person name="Beare D.M."/>
            <person name="Clamp M."/>
            <person name="Smink L.J."/>
            <person name="Ainscough R."/>
            <person name="Almeida J.P."/>
            <person name="Babbage A.K."/>
            <person name="Bagguley C."/>
            <person name="Bailey J."/>
            <person name="Barlow K.F."/>
            <person name="Bates K.N."/>
            <person name="Beasley O.P."/>
            <person name="Bird C.P."/>
            <person name="Blakey S.E."/>
            <person name="Bridgeman A.M."/>
            <person name="Buck D."/>
            <person name="Burgess J."/>
            <person name="Burrill W.D."/>
            <person name="Burton J."/>
            <person name="Carder C."/>
            <person name="Carter N.P."/>
            <person name="Chen Y."/>
            <person name="Clark G."/>
            <person name="Clegg S.M."/>
            <person name="Cobley V.E."/>
            <person name="Cole C.G."/>
            <person name="Collier R.E."/>
            <person name="Connor R."/>
            <person name="Conroy D."/>
            <person name="Corby N.R."/>
            <person name="Coville G.J."/>
            <person name="Cox A.V."/>
            <person name="Davis J."/>
            <person name="Dawson E."/>
            <person name="Dhami P.D."/>
            <person name="Dockree C."/>
            <person name="Dodsworth S.J."/>
            <person name="Durbin R.M."/>
            <person name="Ellington A.G."/>
            <person name="Evans K.L."/>
            <person name="Fey J.M."/>
            <person name="Fleming K."/>
            <person name="French L."/>
            <person name="Garner A.A."/>
            <person name="Gilbert J.G.R."/>
            <person name="Goward M.E."/>
            <person name="Grafham D.V."/>
            <person name="Griffiths M.N.D."/>
            <person name="Hall C."/>
            <person name="Hall R.E."/>
            <person name="Hall-Tamlyn G."/>
            <person name="Heathcott R.W."/>
            <person name="Ho S."/>
            <person name="Holmes S."/>
            <person name="Hunt S.E."/>
            <person name="Jones M.C."/>
            <person name="Kershaw J."/>
            <person name="Kimberley A.M."/>
            <person name="King A."/>
            <person name="Laird G.K."/>
            <person name="Langford C.F."/>
            <person name="Leversha M.A."/>
            <person name="Lloyd C."/>
            <person name="Lloyd D.M."/>
            <person name="Martyn I.D."/>
            <person name="Mashreghi-Mohammadi M."/>
            <person name="Matthews L.H."/>
            <person name="Mccann O.T."/>
            <person name="Mcclay J."/>
            <person name="Mclaren S."/>
            <person name="McMurray A.A."/>
            <person name="Milne S.A."/>
            <person name="Mortimore B.J."/>
            <person name="Odell C.N."/>
            <person name="Pavitt R."/>
            <person name="Pearce A.V."/>
            <person name="Pearson D."/>
            <person name="Phillimore B.J.C.T."/>
            <person name="Phillips S.H."/>
            <person name="Plumb R.W."/>
            <person name="Ramsay H."/>
            <person name="Ramsey Y."/>
            <person name="Rogers L."/>
            <person name="Ross M.T."/>
            <person name="Scott C.E."/>
            <person name="Sehra H.K."/>
            <person name="Skuce C.D."/>
            <person name="Smalley S."/>
            <person name="Smith M.L."/>
            <person name="Soderlund C."/>
            <person name="Spragon L."/>
            <person name="Steward C.A."/>
            <person name="Sulston J.E."/>
            <person name="Swann R.M."/>
            <person name="Vaudin M."/>
            <person name="Wall M."/>
            <person name="Wallis J.M."/>
            <person name="Whiteley M.N."/>
            <person name="Willey D.L."/>
            <person name="Williams L."/>
            <person name="Williams S.A."/>
            <person name="Williamson H."/>
            <person name="Wilmer T.E."/>
            <person name="Wilming L."/>
            <person name="Wright C.L."/>
            <person name="Hubbard T."/>
            <person name="Bentley D.R."/>
            <person name="Beck S."/>
            <person name="Rogers J."/>
            <person name="Shimizu N."/>
            <person name="Minoshima S."/>
            <person name="Kawasaki K."/>
            <person name="Sasaki T."/>
            <person name="Asakawa S."/>
            <person name="Kudoh J."/>
            <person name="Shintani A."/>
            <person name="Shibuya K."/>
            <person name="Yoshizaki Y."/>
            <person name="Aoki N."/>
            <person name="Mitsuyama S."/>
            <person name="Roe B.A."/>
            <person name="Chen F."/>
            <person name="Chu L."/>
            <person name="Crabtree J."/>
            <person name="Deschamps S."/>
            <person name="Do A."/>
            <person name="Do T."/>
            <person name="Dorman A."/>
            <person name="Fang F."/>
            <person name="Fu Y."/>
            <person name="Hu P."/>
            <person name="Hua A."/>
            <person name="Kenton S."/>
            <person name="Lai H."/>
            <person name="Lao H.I."/>
            <person name="Lewis J."/>
            <person name="Lewis S."/>
            <person name="Lin S.-P."/>
            <person name="Loh P."/>
            <person name="Malaj E."/>
            <person name="Nguyen T."/>
            <person name="Pan H."/>
            <person name="Phan S."/>
            <person name="Qi S."/>
            <person name="Qian Y."/>
            <person name="Ray L."/>
            <person name="Ren Q."/>
            <person name="Shaull S."/>
            <person name="Sloan D."/>
            <person name="Song L."/>
            <person name="Wang Q."/>
            <person name="Wang Y."/>
            <person name="Wang Z."/>
            <person name="White J."/>
            <person name="Willingham D."/>
            <person name="Wu H."/>
            <person name="Yao Z."/>
            <person name="Zhan M."/>
            <person name="Zhang G."/>
            <person name="Chissoe S."/>
            <person name="Murray J."/>
            <person name="Miller N."/>
            <person name="Minx P."/>
            <person name="Fulton R."/>
            <person name="Johnson D."/>
            <person name="Bemis G."/>
            <person name="Bentley D."/>
            <person name="Bradshaw H."/>
            <person name="Bourne S."/>
            <person name="Cordes M."/>
            <person name="Du Z."/>
            <person name="Fulton L."/>
            <person name="Goela D."/>
            <person name="Graves T."/>
            <person name="Hawkins J."/>
            <person name="Hinds K."/>
            <person name="Kemp K."/>
            <person name="Latreille P."/>
            <person name="Layman D."/>
            <person name="Ozersky P."/>
            <person name="Rohlfing T."/>
            <person name="Scheet P."/>
            <person name="Walker C."/>
            <person name="Wamsley A."/>
            <person name="Wohldmann P."/>
            <person name="Pepin K."/>
            <person name="Nelson J."/>
            <person name="Korf I."/>
            <person name="Bedell J.A."/>
            <person name="Hillier L.W."/>
            <person name="Mardis E."/>
            <person name="Waterston R."/>
            <person name="Wilson R."/>
            <person name="Emanuel B.S."/>
            <person name="Shaikh T."/>
            <person name="Kurahashi H."/>
            <person name="Saitta S."/>
            <person name="Budarf M.L."/>
            <person name="McDermid H.E."/>
            <person name="Johnson A."/>
            <person name="Wong A.C.C."/>
            <person name="Morrow B.E."/>
            <person name="Edelmann L."/>
            <person name="Kim U.J."/>
            <person name="Shizuya H."/>
            <person name="Simon M.I."/>
            <person name="Dumanski J.P."/>
            <person name="Peyrard M."/>
            <person name="Kedra D."/>
            <person name="Seroussi E."/>
            <person name="Fransson I."/>
            <person name="Tapia I."/>
            <person name="Bruder C.E."/>
            <person name="O'Brien K.P."/>
            <person name="Wilkinson P."/>
            <person name="Bodenteich A."/>
            <person name="Hartman K."/>
            <person name="Hu X."/>
            <person name="Khan A.S."/>
            <person name="Lane L."/>
            <person name="Tilahun Y."/>
            <person name="Wright H."/>
        </authorList>
    </citation>
    <scope>NUCLEOTIDE SEQUENCE [LARGE SCALE GENOMIC DNA] (IMGT ALLELE IGLV3-10*01)</scope>
</reference>
<reference key="2">
    <citation type="submission" date="2005-07" db="EMBL/GenBank/DDBJ databases">
        <authorList>
            <person name="Mural R.J."/>
            <person name="Istrail S."/>
            <person name="Sutton G.G."/>
            <person name="Florea L."/>
            <person name="Halpern A.L."/>
            <person name="Mobarry C.M."/>
            <person name="Lippert R."/>
            <person name="Walenz B."/>
            <person name="Shatkay H."/>
            <person name="Dew I."/>
            <person name="Miller J.R."/>
            <person name="Flanigan M.J."/>
            <person name="Edwards N.J."/>
            <person name="Bolanos R."/>
            <person name="Fasulo D."/>
            <person name="Halldorsson B.V."/>
            <person name="Hannenhalli S."/>
            <person name="Turner R."/>
            <person name="Yooseph S."/>
            <person name="Lu F."/>
            <person name="Nusskern D.R."/>
            <person name="Shue B.C."/>
            <person name="Zheng X.H."/>
            <person name="Zhong F."/>
            <person name="Delcher A.L."/>
            <person name="Huson D.H."/>
            <person name="Kravitz S.A."/>
            <person name="Mouchard L."/>
            <person name="Reinert K."/>
            <person name="Remington K.A."/>
            <person name="Clark A.G."/>
            <person name="Waterman M.S."/>
            <person name="Eichler E.E."/>
            <person name="Adams M.D."/>
            <person name="Hunkapiller M.W."/>
            <person name="Myers E.W."/>
            <person name="Venter J.C."/>
        </authorList>
    </citation>
    <scope>NUCLEOTIDE SEQUENCE [LARGE SCALE GENOMIC DNA]</scope>
</reference>
<reference key="3">
    <citation type="journal article" date="2001" name="Exp. Clin. Immunogenet.">
        <title>Nomenclature of the human immunoglobulin lambda (IGL) genes.</title>
        <authorList>
            <person name="Lefranc M.P."/>
        </authorList>
    </citation>
    <scope>NOMENCLATURE</scope>
</reference>
<reference key="4">
    <citation type="book" date="2001" name="The Immunoglobulin FactsBook.">
        <title>The Immunoglobulin FactsBook.</title>
        <editorList>
            <person name="Lefranc M.P."/>
            <person name="Lefranc G."/>
        </editorList>
        <authorList>
            <person name="Lefranc M.P."/>
            <person name="Lefranc G."/>
        </authorList>
    </citation>
    <scope>NOMENCLATURE</scope>
</reference>
<reference key="5">
    <citation type="journal article" date="2007" name="Annu. Rev. Genet.">
        <title>Immunoglobulin somatic hypermutation.</title>
        <authorList>
            <person name="Teng G."/>
            <person name="Papavasiliou F.N."/>
        </authorList>
    </citation>
    <scope>REVIEW ON SOMATIC HYPERMUTATION</scope>
</reference>
<reference key="6">
    <citation type="journal article" date="2010" name="J. Allergy Clin. Immunol.">
        <title>Structure and function of immunoglobulins.</title>
        <authorList>
            <person name="Schroeder H.W. Jr."/>
            <person name="Cavacini L."/>
        </authorList>
    </citation>
    <scope>REVIEW ON IMMUNOGLOBULINS</scope>
</reference>
<reference key="7">
    <citation type="journal article" date="2012" name="Nat. Rev. Immunol.">
        <title>Molecular programming of B cell memory.</title>
        <authorList>
            <person name="McHeyzer-Williams M."/>
            <person name="Okitsu S."/>
            <person name="Wang N."/>
            <person name="McHeyzer-Williams L."/>
        </authorList>
    </citation>
    <scope>REVIEW ON FUNCTION</scope>
</reference>
<reference key="8">
    <citation type="journal article" date="2014" name="Front. Immunol.">
        <title>Immunoglobulin and T Cell Receptor Genes: IMGT((R)) and the Birth and Rise of Immunoinformatics.</title>
        <authorList>
            <person name="Lefranc M.P."/>
        </authorList>
    </citation>
    <scope>NOMENCLATURE</scope>
</reference>
<feature type="signal peptide" evidence="2">
    <location>
        <begin position="1"/>
        <end position="19"/>
    </location>
</feature>
<feature type="chain" id="PRO_5007375746" description="Immunoglobulin lambda variable 3-10" evidence="2">
    <location>
        <begin position="20"/>
        <end position="115"/>
    </location>
</feature>
<feature type="domain" description="Ig-like" evidence="3">
    <location>
        <begin position="20"/>
        <end position="115" status="greater than"/>
    </location>
</feature>
<feature type="region of interest" description="Framework-1" evidence="1">
    <location>
        <begin position="20"/>
        <end position="41"/>
    </location>
</feature>
<feature type="region of interest" description="Complementarity-determining-1" evidence="1">
    <location>
        <begin position="42"/>
        <end position="50"/>
    </location>
</feature>
<feature type="region of interest" description="Framework-2" evidence="1">
    <location>
        <begin position="51"/>
        <end position="67"/>
    </location>
</feature>
<feature type="region of interest" description="Complementarity-determining-2" evidence="1">
    <location>
        <begin position="68"/>
        <end position="70"/>
    </location>
</feature>
<feature type="region of interest" description="Framework-3" evidence="1">
    <location>
        <begin position="71"/>
        <end position="106"/>
    </location>
</feature>
<feature type="region of interest" description="Complementarity-determining-3" evidence="1">
    <location>
        <begin position="107"/>
        <end position="115" status="greater than"/>
    </location>
</feature>
<feature type="disulfide bond" evidence="3">
    <location>
        <begin position="41"/>
        <end position="106"/>
    </location>
</feature>
<feature type="non-terminal residue">
    <location>
        <position position="115"/>
    </location>
</feature>
<sequence>MAWTPLLLPLLTFCTVSEASYELTQPPSVSVSPGQTARITCSGDALPKKYAYWYQQKSGQAPVLVIYEDSKRPSGIPERFSGSSSGTMATLTISGAQVEDEADYYCYSTDSSGNH</sequence>
<organism>
    <name type="scientific">Homo sapiens</name>
    <name type="common">Human</name>
    <dbReference type="NCBI Taxonomy" id="9606"/>
    <lineage>
        <taxon>Eukaryota</taxon>
        <taxon>Metazoa</taxon>
        <taxon>Chordata</taxon>
        <taxon>Craniata</taxon>
        <taxon>Vertebrata</taxon>
        <taxon>Euteleostomi</taxon>
        <taxon>Mammalia</taxon>
        <taxon>Eutheria</taxon>
        <taxon>Euarchontoglires</taxon>
        <taxon>Primates</taxon>
        <taxon>Haplorrhini</taxon>
        <taxon>Catarrhini</taxon>
        <taxon>Hominidae</taxon>
        <taxon>Homo</taxon>
    </lineage>
</organism>